<reference key="1">
    <citation type="submission" date="2006-10" db="EMBL/GenBank/DDBJ databases">
        <authorList>
            <consortium name="Sanger Xenopus tropicalis EST/cDNA project"/>
        </authorList>
    </citation>
    <scope>NUCLEOTIDE SEQUENCE [LARGE SCALE MRNA]</scope>
    <source>
        <tissue>Gastrula</tissue>
    </source>
</reference>
<comment type="function">
    <text evidence="1">E3 ubiquitin-protein ligase which may be involved in endosomal trafficking. E3 ubiquitin ligases accept ubiquitin from an E2 ubiquitin-conjugating enzyme in the form of a thioester and then directly transfer the ubiquitin to targeted substrates.</text>
</comment>
<comment type="catalytic activity">
    <reaction>
        <text>S-ubiquitinyl-[E2 ubiquitin-conjugating enzyme]-L-cysteine + [acceptor protein]-L-lysine = [E2 ubiquitin-conjugating enzyme]-L-cysteine + N(6)-ubiquitinyl-[acceptor protein]-L-lysine.</text>
        <dbReference type="EC" id="2.3.2.27"/>
    </reaction>
</comment>
<comment type="pathway">
    <text>Protein modification; protein ubiquitination.</text>
</comment>
<comment type="subcellular location">
    <subcellularLocation>
        <location>Endoplasmic reticulum membrane</location>
        <topology>Multi-pass membrane protein</topology>
    </subcellularLocation>
    <subcellularLocation>
        <location>Lysosome membrane</location>
        <topology>Multi-pass membrane protein</topology>
    </subcellularLocation>
    <subcellularLocation>
        <location evidence="1">Endosome membrane</location>
        <topology evidence="1">Multi-pass membrane protein</topology>
    </subcellularLocation>
</comment>
<comment type="domain">
    <text evidence="3">The RING-CH-type zinc finger domain is required for E3 ligase activity.</text>
</comment>
<protein>
    <recommendedName>
        <fullName>E3 ubiquitin-protein ligase MARCHF2</fullName>
        <ecNumber>2.3.2.27</ecNumber>
    </recommendedName>
    <alternativeName>
        <fullName>Membrane-associated RING finger protein 2</fullName>
    </alternativeName>
    <alternativeName>
        <fullName>Membrane-associated RING-CH protein II</fullName>
        <shortName>MARCH-II</shortName>
    </alternativeName>
    <alternativeName>
        <fullName evidence="4">RING-type E3 ubiquitin transferase MARCHF2</fullName>
    </alternativeName>
</protein>
<gene>
    <name type="primary">marchf2</name>
    <name type="synonym">march2</name>
    <name type="ORF">TGas088c08.1</name>
</gene>
<dbReference type="EC" id="2.3.2.27"/>
<dbReference type="EMBL" id="CR762288">
    <property type="protein sequence ID" value="CAJ83593.1"/>
    <property type="molecule type" value="mRNA"/>
</dbReference>
<dbReference type="RefSeq" id="NP_001017006.1">
    <property type="nucleotide sequence ID" value="NM_001017006.2"/>
</dbReference>
<dbReference type="SMR" id="Q28EX7"/>
<dbReference type="FunCoup" id="Q28EX7">
    <property type="interactions" value="810"/>
</dbReference>
<dbReference type="STRING" id="8364.ENSXETP00000037556"/>
<dbReference type="PaxDb" id="8364-ENSXETP00000047379"/>
<dbReference type="DNASU" id="549760"/>
<dbReference type="GeneID" id="549760"/>
<dbReference type="KEGG" id="xtr:549760"/>
<dbReference type="AGR" id="Xenbase:XB-GENE-945914"/>
<dbReference type="CTD" id="51257"/>
<dbReference type="Xenbase" id="XB-GENE-945914">
    <property type="gene designation" value="marchf2"/>
</dbReference>
<dbReference type="eggNOG" id="KOG1609">
    <property type="taxonomic scope" value="Eukaryota"/>
</dbReference>
<dbReference type="HOGENOM" id="CLU_096532_0_0_1"/>
<dbReference type="InParanoid" id="Q28EX7"/>
<dbReference type="OMA" id="ICHEGNN"/>
<dbReference type="OrthoDB" id="273089at2759"/>
<dbReference type="TreeFam" id="TF319557"/>
<dbReference type="UniPathway" id="UPA00143"/>
<dbReference type="Proteomes" id="UP000008143">
    <property type="component" value="Chromosome 1"/>
</dbReference>
<dbReference type="GO" id="GO:0031410">
    <property type="term" value="C:cytoplasmic vesicle"/>
    <property type="evidence" value="ECO:0000250"/>
    <property type="project" value="UniProtKB"/>
</dbReference>
<dbReference type="GO" id="GO:0005783">
    <property type="term" value="C:endoplasmic reticulum"/>
    <property type="evidence" value="ECO:0000250"/>
    <property type="project" value="UniProtKB"/>
</dbReference>
<dbReference type="GO" id="GO:0005789">
    <property type="term" value="C:endoplasmic reticulum membrane"/>
    <property type="evidence" value="ECO:0007669"/>
    <property type="project" value="UniProtKB-SubCell"/>
</dbReference>
<dbReference type="GO" id="GO:0010008">
    <property type="term" value="C:endosome membrane"/>
    <property type="evidence" value="ECO:0007669"/>
    <property type="project" value="UniProtKB-SubCell"/>
</dbReference>
<dbReference type="GO" id="GO:0005765">
    <property type="term" value="C:lysosomal membrane"/>
    <property type="evidence" value="ECO:0007669"/>
    <property type="project" value="UniProtKB-SubCell"/>
</dbReference>
<dbReference type="GO" id="GO:0061630">
    <property type="term" value="F:ubiquitin protein ligase activity"/>
    <property type="evidence" value="ECO:0000250"/>
    <property type="project" value="UniProtKB"/>
</dbReference>
<dbReference type="GO" id="GO:0008270">
    <property type="term" value="F:zinc ion binding"/>
    <property type="evidence" value="ECO:0007669"/>
    <property type="project" value="UniProtKB-KW"/>
</dbReference>
<dbReference type="GO" id="GO:0006897">
    <property type="term" value="P:endocytosis"/>
    <property type="evidence" value="ECO:0007669"/>
    <property type="project" value="UniProtKB-KW"/>
</dbReference>
<dbReference type="GO" id="GO:0016567">
    <property type="term" value="P:protein ubiquitination"/>
    <property type="evidence" value="ECO:0000250"/>
    <property type="project" value="UniProtKB"/>
</dbReference>
<dbReference type="CDD" id="cd16808">
    <property type="entry name" value="RING_CH-C4HC3_MARCH2"/>
    <property type="match status" value="1"/>
</dbReference>
<dbReference type="FunFam" id="3.30.40.10:FF:000119">
    <property type="entry name" value="E3 ubiquitin-protein ligase MARCH2"/>
    <property type="match status" value="1"/>
</dbReference>
<dbReference type="Gene3D" id="3.30.40.10">
    <property type="entry name" value="Zinc/RING finger domain, C3HC4 (zinc finger)"/>
    <property type="match status" value="1"/>
</dbReference>
<dbReference type="InterPro" id="IPR011016">
    <property type="entry name" value="Znf_RING-CH"/>
</dbReference>
<dbReference type="InterPro" id="IPR013083">
    <property type="entry name" value="Znf_RING/FYVE/PHD"/>
</dbReference>
<dbReference type="PANTHER" id="PTHR46065">
    <property type="entry name" value="E3 UBIQUITIN-PROTEIN LIGASE MARCH 2/3 FAMILY MEMBER"/>
    <property type="match status" value="1"/>
</dbReference>
<dbReference type="PANTHER" id="PTHR46065:SF4">
    <property type="entry name" value="E3 UBIQUITIN-PROTEIN LIGASE MARCHF2"/>
    <property type="match status" value="1"/>
</dbReference>
<dbReference type="Pfam" id="PF12906">
    <property type="entry name" value="RINGv"/>
    <property type="match status" value="1"/>
</dbReference>
<dbReference type="SMART" id="SM00744">
    <property type="entry name" value="RINGv"/>
    <property type="match status" value="1"/>
</dbReference>
<dbReference type="SUPFAM" id="SSF57850">
    <property type="entry name" value="RING/U-box"/>
    <property type="match status" value="1"/>
</dbReference>
<dbReference type="PROSITE" id="PS51292">
    <property type="entry name" value="ZF_RING_CH"/>
    <property type="match status" value="1"/>
</dbReference>
<evidence type="ECO:0000250" key="1"/>
<evidence type="ECO:0000255" key="2"/>
<evidence type="ECO:0000255" key="3">
    <source>
        <dbReference type="PROSITE-ProRule" id="PRU00623"/>
    </source>
</evidence>
<evidence type="ECO:0000305" key="4"/>
<organism>
    <name type="scientific">Xenopus tropicalis</name>
    <name type="common">Western clawed frog</name>
    <name type="synonym">Silurana tropicalis</name>
    <dbReference type="NCBI Taxonomy" id="8364"/>
    <lineage>
        <taxon>Eukaryota</taxon>
        <taxon>Metazoa</taxon>
        <taxon>Chordata</taxon>
        <taxon>Craniata</taxon>
        <taxon>Vertebrata</taxon>
        <taxon>Euteleostomi</taxon>
        <taxon>Amphibia</taxon>
        <taxon>Batrachia</taxon>
        <taxon>Anura</taxon>
        <taxon>Pipoidea</taxon>
        <taxon>Pipidae</taxon>
        <taxon>Xenopodinae</taxon>
        <taxon>Xenopus</taxon>
        <taxon>Silurana</taxon>
    </lineage>
</organism>
<keyword id="KW-0254">Endocytosis</keyword>
<keyword id="KW-0256">Endoplasmic reticulum</keyword>
<keyword id="KW-0967">Endosome</keyword>
<keyword id="KW-0458">Lysosome</keyword>
<keyword id="KW-0472">Membrane</keyword>
<keyword id="KW-0479">Metal-binding</keyword>
<keyword id="KW-1185">Reference proteome</keyword>
<keyword id="KW-0808">Transferase</keyword>
<keyword id="KW-0812">Transmembrane</keyword>
<keyword id="KW-1133">Transmembrane helix</keyword>
<keyword id="KW-0833">Ubl conjugation pathway</keyword>
<keyword id="KW-0862">Zinc</keyword>
<keyword id="KW-0863">Zinc-finger</keyword>
<proteinExistence type="evidence at transcript level"/>
<sequence length="246" mass="27289">MTTGDCCHLPGSLCDCTGSATFLKSLEESDLGRPQYVTQVTAKDGQLLSTVIKALGTQSDGPICRICHEGGNGERLLSPCDCTGTLGTVHKTCLEKWLSSSNTSYCELCHTEFAVERRPRPVTEWLKDPGPRNEKRTLFCDMVCFLFITPLAAISGWLCLRGAQDHLQFNSRLEAVGLIALTIALFTIYVLWTLVSFRYHCQLYSEWRRTNQKVLLLIPDSKTAPTTHHSLLSSKLLKSASDETTV</sequence>
<name>MARH2_XENTR</name>
<feature type="chain" id="PRO_0000274506" description="E3 ubiquitin-protein ligase MARCHF2">
    <location>
        <begin position="1"/>
        <end position="246"/>
    </location>
</feature>
<feature type="transmembrane region" description="Helical" evidence="2">
    <location>
        <begin position="138"/>
        <end position="158"/>
    </location>
</feature>
<feature type="transmembrane region" description="Helical" evidence="2">
    <location>
        <begin position="175"/>
        <end position="195"/>
    </location>
</feature>
<feature type="zinc finger region" description="RING-CH-type" evidence="3">
    <location>
        <begin position="56"/>
        <end position="116"/>
    </location>
</feature>
<feature type="binding site" evidence="3">
    <location>
        <position position="64"/>
    </location>
    <ligand>
        <name>Zn(2+)</name>
        <dbReference type="ChEBI" id="CHEBI:29105"/>
        <label>1</label>
    </ligand>
</feature>
<feature type="binding site" evidence="3">
    <location>
        <position position="67"/>
    </location>
    <ligand>
        <name>Zn(2+)</name>
        <dbReference type="ChEBI" id="CHEBI:29105"/>
        <label>1</label>
    </ligand>
</feature>
<feature type="binding site" evidence="3">
    <location>
        <position position="80"/>
    </location>
    <ligand>
        <name>Zn(2+)</name>
        <dbReference type="ChEBI" id="CHEBI:29105"/>
        <label>2</label>
    </ligand>
</feature>
<feature type="binding site" evidence="3">
    <location>
        <position position="82"/>
    </location>
    <ligand>
        <name>Zn(2+)</name>
        <dbReference type="ChEBI" id="CHEBI:29105"/>
        <label>2</label>
    </ligand>
</feature>
<feature type="binding site" evidence="3">
    <location>
        <position position="90"/>
    </location>
    <ligand>
        <name>Zn(2+)</name>
        <dbReference type="ChEBI" id="CHEBI:29105"/>
        <label>1</label>
    </ligand>
</feature>
<feature type="binding site" evidence="3">
    <location>
        <position position="93"/>
    </location>
    <ligand>
        <name>Zn(2+)</name>
        <dbReference type="ChEBI" id="CHEBI:29105"/>
        <label>1</label>
    </ligand>
</feature>
<feature type="binding site" evidence="3">
    <location>
        <position position="106"/>
    </location>
    <ligand>
        <name>Zn(2+)</name>
        <dbReference type="ChEBI" id="CHEBI:29105"/>
        <label>2</label>
    </ligand>
</feature>
<feature type="binding site" evidence="3">
    <location>
        <position position="109"/>
    </location>
    <ligand>
        <name>Zn(2+)</name>
        <dbReference type="ChEBI" id="CHEBI:29105"/>
        <label>2</label>
    </ligand>
</feature>
<accession>Q28EX7</accession>